<name>PCDB8_PANTR</name>
<protein>
    <recommendedName>
        <fullName evidence="5">Protocadherin beta-8</fullName>
        <shortName evidence="5">PCDH-beta-8</shortName>
    </recommendedName>
</protein>
<sequence length="801" mass="87540">MEASGKLICRQRQVLFSFLLLGLSLAGAAEPRSYSVVEETEGSSFVTNLAKDLGLEQREFSRRGVRVVSRGNKLHLQLNQETGDLLLNEKLDREDLCGHTEPCVLRFQVLLESPFEFFQAELQVIDINDHSPVFLDKQMLVKVSESSPPGTAFPLKNAEDLDVGQNNIENYIISPNSYFRVLTRKRSDGRKYPELVLDKALDREEEAELRLTLTALDGGSPPRSGTAQVYIEVVDVNDNAPEFEQPFYRVQISEDSPISFLVVKVSATDVDTGVNGEISYSLFQASDEISKTFKVDFLTGEIRLKKQLDFEKFQSYEVNIEARDAGGFSGKCTVLIQVIDVNDHAPEVTMSAFTSPIPENAPETVVALFSVSDLDSGENGKISCSIQEDLPFLLKSSVGNFYTLLTETPLDRESRAEYNVTITVTDLGTPGLTTHLNMTVLVSDVNDNAPAFTQASYTLFVRENNSPALHIGSVSATDRDSGTNAQVTYSLLPPQNPHLPLASLVSINTDNGHLFALRSLDYEALQAFEFRVGASDRGSPALSSEALVRVLVLDANDNSPFVLYPLQNSSAPCTELVPRAAEPGYLVTKVVAVDGDSGQNAWLSYQLLKATEPGLFGVWAHNGEVRTARLLSERDAAKQRLVVLVKDNGEPPCSATATLHVLLVDGFSQPYLPLPEAAPAQGQADSLTVYLVVALASVSSLFLFSVLLFVAVRLCRRSRAASVGRCSVPEGPFPGHLVDVRGTGSLSQNYQYEVCLAGGSGTNEFQFLKPVLPNIQGHSFGPEMEQNSNFRNGFGFSLQLK</sequence>
<feature type="signal peptide" evidence="1">
    <location>
        <begin position="1"/>
        <end position="29"/>
    </location>
</feature>
<feature type="chain" id="PRO_0000003929" description="Protocadherin beta-8">
    <location>
        <begin position="30"/>
        <end position="801"/>
    </location>
</feature>
<feature type="topological domain" description="Extracellular" evidence="1">
    <location>
        <begin position="30"/>
        <end position="691"/>
    </location>
</feature>
<feature type="transmembrane region" description="Helical" evidence="3">
    <location>
        <begin position="692"/>
        <end position="710"/>
    </location>
</feature>
<feature type="topological domain" description="Cytoplasmic" evidence="1">
    <location>
        <begin position="711"/>
        <end position="801"/>
    </location>
</feature>
<feature type="domain" description="Cadherin 1" evidence="4">
    <location>
        <begin position="36"/>
        <end position="134"/>
    </location>
</feature>
<feature type="domain" description="Cadherin 2" evidence="4">
    <location>
        <begin position="139"/>
        <end position="243"/>
    </location>
</feature>
<feature type="domain" description="Cadherin 3" evidence="4">
    <location>
        <begin position="248"/>
        <end position="348"/>
    </location>
</feature>
<feature type="domain" description="Cadherin 4" evidence="4">
    <location>
        <begin position="353"/>
        <end position="452"/>
    </location>
</feature>
<feature type="domain" description="Cadherin 5" evidence="4">
    <location>
        <begin position="457"/>
        <end position="562"/>
    </location>
</feature>
<feature type="domain" description="Cadherin 6" evidence="4">
    <location>
        <begin position="569"/>
        <end position="672"/>
    </location>
</feature>
<feature type="glycosylation site" description="N-linked (GlcNAc...) asparagine" evidence="3">
    <location>
        <position position="419"/>
    </location>
</feature>
<feature type="glycosylation site" description="N-linked (GlcNAc...) asparagine" evidence="3">
    <location>
        <position position="437"/>
    </location>
</feature>
<feature type="glycosylation site" description="N-linked (GlcNAc...) asparagine" evidence="3">
    <location>
        <position position="568"/>
    </location>
</feature>
<feature type="disulfide bond" evidence="1">
    <location>
        <begin position="97"/>
        <end position="103"/>
    </location>
</feature>
<proteinExistence type="inferred from homology"/>
<keyword id="KW-0106">Calcium</keyword>
<keyword id="KW-0130">Cell adhesion</keyword>
<keyword id="KW-1003">Cell membrane</keyword>
<keyword id="KW-1015">Disulfide bond</keyword>
<keyword id="KW-0325">Glycoprotein</keyword>
<keyword id="KW-0472">Membrane</keyword>
<keyword id="KW-0479">Metal-binding</keyword>
<keyword id="KW-1185">Reference proteome</keyword>
<keyword id="KW-0677">Repeat</keyword>
<keyword id="KW-0732">Signal</keyword>
<keyword id="KW-0812">Transmembrane</keyword>
<keyword id="KW-1133">Transmembrane helix</keyword>
<accession>Q5DRC6</accession>
<dbReference type="SMR" id="Q5DRC6"/>
<dbReference type="FunCoup" id="Q5DRC6">
    <property type="interactions" value="1"/>
</dbReference>
<dbReference type="GlyCosmos" id="Q5DRC6">
    <property type="glycosylation" value="3 sites, No reported glycans"/>
</dbReference>
<dbReference type="PaxDb" id="9598-ENSPTRP00000060233"/>
<dbReference type="eggNOG" id="KOG3594">
    <property type="taxonomic scope" value="Eukaryota"/>
</dbReference>
<dbReference type="InParanoid" id="Q5DRC6"/>
<dbReference type="Proteomes" id="UP000002277">
    <property type="component" value="Unplaced"/>
</dbReference>
<dbReference type="GO" id="GO:0005886">
    <property type="term" value="C:plasma membrane"/>
    <property type="evidence" value="ECO:0000318"/>
    <property type="project" value="GO_Central"/>
</dbReference>
<dbReference type="GO" id="GO:0005509">
    <property type="term" value="F:calcium ion binding"/>
    <property type="evidence" value="ECO:0000250"/>
    <property type="project" value="UniProtKB"/>
</dbReference>
<dbReference type="GO" id="GO:0042802">
    <property type="term" value="F:identical protein binding"/>
    <property type="evidence" value="ECO:0000250"/>
    <property type="project" value="UniProtKB"/>
</dbReference>
<dbReference type="GO" id="GO:0007155">
    <property type="term" value="P:cell adhesion"/>
    <property type="evidence" value="ECO:0000318"/>
    <property type="project" value="GO_Central"/>
</dbReference>
<dbReference type="GO" id="GO:0007156">
    <property type="term" value="P:homophilic cell adhesion via plasma membrane adhesion molecules"/>
    <property type="evidence" value="ECO:0007669"/>
    <property type="project" value="InterPro"/>
</dbReference>
<dbReference type="GO" id="GO:0007399">
    <property type="term" value="P:nervous system development"/>
    <property type="evidence" value="ECO:0007669"/>
    <property type="project" value="UniProtKB-ARBA"/>
</dbReference>
<dbReference type="CDD" id="cd11304">
    <property type="entry name" value="Cadherin_repeat"/>
    <property type="match status" value="5"/>
</dbReference>
<dbReference type="FunFam" id="2.60.40.60:FF:000001">
    <property type="entry name" value="Protocadherin alpha 2"/>
    <property type="match status" value="1"/>
</dbReference>
<dbReference type="FunFam" id="2.60.40.60:FF:000002">
    <property type="entry name" value="Protocadherin alpha 2"/>
    <property type="match status" value="1"/>
</dbReference>
<dbReference type="FunFam" id="2.60.40.60:FF:000006">
    <property type="entry name" value="Protocadherin alpha 2"/>
    <property type="match status" value="1"/>
</dbReference>
<dbReference type="FunFam" id="2.60.40.60:FF:000046">
    <property type="entry name" value="Protocadherin beta 5"/>
    <property type="match status" value="1"/>
</dbReference>
<dbReference type="FunFam" id="2.60.40.60:FF:000309">
    <property type="entry name" value="Protocadherin beta-8"/>
    <property type="match status" value="1"/>
</dbReference>
<dbReference type="FunFam" id="2.60.40.60:FF:000018">
    <property type="entry name" value="Protocadherin gamma c3"/>
    <property type="match status" value="1"/>
</dbReference>
<dbReference type="Gene3D" id="2.60.40.60">
    <property type="entry name" value="Cadherins"/>
    <property type="match status" value="6"/>
</dbReference>
<dbReference type="InterPro" id="IPR002126">
    <property type="entry name" value="Cadherin-like_dom"/>
</dbReference>
<dbReference type="InterPro" id="IPR015919">
    <property type="entry name" value="Cadherin-like_sf"/>
</dbReference>
<dbReference type="InterPro" id="IPR032455">
    <property type="entry name" value="Cadherin_C"/>
</dbReference>
<dbReference type="InterPro" id="IPR020894">
    <property type="entry name" value="Cadherin_CS"/>
</dbReference>
<dbReference type="InterPro" id="IPR013164">
    <property type="entry name" value="Cadherin_N"/>
</dbReference>
<dbReference type="InterPro" id="IPR050174">
    <property type="entry name" value="Protocadherin/Cadherin-CA"/>
</dbReference>
<dbReference type="PANTHER" id="PTHR24028">
    <property type="entry name" value="CADHERIN-87A"/>
    <property type="match status" value="1"/>
</dbReference>
<dbReference type="PANTHER" id="PTHR24028:SF338">
    <property type="entry name" value="PROTOCADHERIN BETA-8"/>
    <property type="match status" value="1"/>
</dbReference>
<dbReference type="Pfam" id="PF00028">
    <property type="entry name" value="Cadherin"/>
    <property type="match status" value="5"/>
</dbReference>
<dbReference type="Pfam" id="PF08266">
    <property type="entry name" value="Cadherin_2"/>
    <property type="match status" value="1"/>
</dbReference>
<dbReference type="Pfam" id="PF16492">
    <property type="entry name" value="Cadherin_C_2"/>
    <property type="match status" value="1"/>
</dbReference>
<dbReference type="PRINTS" id="PR00205">
    <property type="entry name" value="CADHERIN"/>
</dbReference>
<dbReference type="SMART" id="SM00112">
    <property type="entry name" value="CA"/>
    <property type="match status" value="6"/>
</dbReference>
<dbReference type="SUPFAM" id="SSF49313">
    <property type="entry name" value="Cadherin-like"/>
    <property type="match status" value="5"/>
</dbReference>
<dbReference type="PROSITE" id="PS00232">
    <property type="entry name" value="CADHERIN_1"/>
    <property type="match status" value="5"/>
</dbReference>
<dbReference type="PROSITE" id="PS50268">
    <property type="entry name" value="CADHERIN_2"/>
    <property type="match status" value="6"/>
</dbReference>
<evidence type="ECO:0000250" key="1">
    <source>
        <dbReference type="UniProtKB" id="Q91XZ2"/>
    </source>
</evidence>
<evidence type="ECO:0000250" key="2">
    <source>
        <dbReference type="UniProtKB" id="Q9UN66"/>
    </source>
</evidence>
<evidence type="ECO:0000255" key="3"/>
<evidence type="ECO:0000255" key="4">
    <source>
        <dbReference type="PROSITE-ProRule" id="PRU00043"/>
    </source>
</evidence>
<evidence type="ECO:0000305" key="5"/>
<reference key="1">
    <citation type="journal article" date="2005" name="Nature">
        <title>Initial sequence of the chimpanzee genome and comparison with the human genome.</title>
        <authorList>
            <consortium name="Chimpanzee sequencing and analysis consortium"/>
        </authorList>
    </citation>
    <scope>NUCLEOTIDE SEQUENCE [LARGE SCALE GENOMIC DNA]</scope>
</reference>
<reference key="2">
    <citation type="journal article" date="2005" name="Genetics">
        <title>Comparative genomics and diversifying selection of the clustered vertebrate protocadherin genes.</title>
        <authorList>
            <person name="Wu Q."/>
        </authorList>
    </citation>
    <scope>IDENTIFICATION</scope>
</reference>
<gene>
    <name evidence="2" type="primary">PCDHB8</name>
</gene>
<comment type="function">
    <text evidence="1">Calcium-dependent cell-adhesion protein involved in cells self-recognition and non-self discrimination. Thereby, it is involved in the establishment and maintenance of specific neuronal connections in the brain.</text>
</comment>
<comment type="subunit">
    <text evidence="1">Forms homodimers in trans (molecules expressed by two different cells). Forms promiscuous heterodimers in cis (at the plasma membrane of the same cell) with other protocadherins.</text>
</comment>
<comment type="subcellular location">
    <subcellularLocation>
        <location evidence="1">Cell membrane</location>
        <topology evidence="1">Single-pass type I membrane protein</topology>
    </subcellularLocation>
</comment>
<comment type="domain">
    <text evidence="1">Cadherin 1 to cadherin 4 domains mediate homophilic trans-interaction, the interaction with an identical protocadherin expressed by a neighboring cell. This is a head-to-tail interaction, the cadherin 1 domain interacting with the cadherin 4 domain and the cadherin 2 domain interacting the cadherin 3 domain of the other protocadherin. The cadherin 6 domain mediates promiscuous interactions with protocadherins on the same cell membrane. Each cadherin domain binds three calcium ions.</text>
</comment>
<organism>
    <name type="scientific">Pan troglodytes</name>
    <name type="common">Chimpanzee</name>
    <dbReference type="NCBI Taxonomy" id="9598"/>
    <lineage>
        <taxon>Eukaryota</taxon>
        <taxon>Metazoa</taxon>
        <taxon>Chordata</taxon>
        <taxon>Craniata</taxon>
        <taxon>Vertebrata</taxon>
        <taxon>Euteleostomi</taxon>
        <taxon>Mammalia</taxon>
        <taxon>Eutheria</taxon>
        <taxon>Euarchontoglires</taxon>
        <taxon>Primates</taxon>
        <taxon>Haplorrhini</taxon>
        <taxon>Catarrhini</taxon>
        <taxon>Hominidae</taxon>
        <taxon>Pan</taxon>
    </lineage>
</organism>